<protein>
    <recommendedName>
        <fullName evidence="1">Acetyl-coenzyme A carboxylase carboxyl transferase subunit beta</fullName>
        <shortName evidence="1">ACCase subunit beta</shortName>
        <shortName evidence="1">Acetyl-CoA carboxylase carboxyltransferase subunit beta</shortName>
        <ecNumber evidence="1">2.1.3.15</ecNumber>
    </recommendedName>
</protein>
<organism>
    <name type="scientific">Gloeobacter violaceus (strain ATCC 29082 / PCC 7421)</name>
    <dbReference type="NCBI Taxonomy" id="251221"/>
    <lineage>
        <taxon>Bacteria</taxon>
        <taxon>Bacillati</taxon>
        <taxon>Cyanobacteriota</taxon>
        <taxon>Cyanophyceae</taxon>
        <taxon>Gloeobacterales</taxon>
        <taxon>Gloeobacteraceae</taxon>
        <taxon>Gloeobacter</taxon>
    </lineage>
</organism>
<name>ACCD_GLOVI</name>
<evidence type="ECO:0000255" key="1">
    <source>
        <dbReference type="HAMAP-Rule" id="MF_01395"/>
    </source>
</evidence>
<evidence type="ECO:0000255" key="2">
    <source>
        <dbReference type="PROSITE-ProRule" id="PRU01136"/>
    </source>
</evidence>
<reference key="1">
    <citation type="journal article" date="2003" name="DNA Res.">
        <title>Complete genome structure of Gloeobacter violaceus PCC 7421, a cyanobacterium that lacks thylakoids.</title>
        <authorList>
            <person name="Nakamura Y."/>
            <person name="Kaneko T."/>
            <person name="Sato S."/>
            <person name="Mimuro M."/>
            <person name="Miyashita H."/>
            <person name="Tsuchiya T."/>
            <person name="Sasamoto S."/>
            <person name="Watanabe A."/>
            <person name="Kawashima K."/>
            <person name="Kishida Y."/>
            <person name="Kiyokawa C."/>
            <person name="Kohara M."/>
            <person name="Matsumoto M."/>
            <person name="Matsuno A."/>
            <person name="Nakazaki N."/>
            <person name="Shimpo S."/>
            <person name="Takeuchi C."/>
            <person name="Yamada M."/>
            <person name="Tabata S."/>
        </authorList>
    </citation>
    <scope>NUCLEOTIDE SEQUENCE [LARGE SCALE GENOMIC DNA]</scope>
    <source>
        <strain>ATCC 29082 / PCC 7421</strain>
    </source>
</reference>
<accession>Q7NK73</accession>
<proteinExistence type="inferred from homology"/>
<sequence length="304" mass="33569">MDLIEWFKDRRKNGRLSKEERQREIADGLWTKCVSCAALHYTKDFQLNLCVCPACGHHERVGAPERIPQLVDPDSWVSTDDHLLANDPLGFNDIKSYPERLAQAREKTGLSDAIVTGLATLEGRPIALGVMDFRFMGGSMGSVVGERITRLVERATAERRAAILVCASGGARMQEGVLSLVQMARTSAALQNHRSDRQLFVSVLTNPTTGGVTASFAMLGDIILAEPKATIGFAGRRVIEQTLRQKLPEGFQTAEFLLKHGFVDRIVERAQLRPTLARILRLHGVGQVQAYRPSPQASLAQEQQ</sequence>
<comment type="function">
    <text evidence="1">Component of the acetyl coenzyme A carboxylase (ACC) complex. Biotin carboxylase (BC) catalyzes the carboxylation of biotin on its carrier protein (BCCP) and then the CO(2) group is transferred by the transcarboxylase to acetyl-CoA to form malonyl-CoA.</text>
</comment>
<comment type="catalytic activity">
    <reaction evidence="1">
        <text>N(6)-carboxybiotinyl-L-lysyl-[protein] + acetyl-CoA = N(6)-biotinyl-L-lysyl-[protein] + malonyl-CoA</text>
        <dbReference type="Rhea" id="RHEA:54728"/>
        <dbReference type="Rhea" id="RHEA-COMP:10505"/>
        <dbReference type="Rhea" id="RHEA-COMP:10506"/>
        <dbReference type="ChEBI" id="CHEBI:57288"/>
        <dbReference type="ChEBI" id="CHEBI:57384"/>
        <dbReference type="ChEBI" id="CHEBI:83144"/>
        <dbReference type="ChEBI" id="CHEBI:83145"/>
        <dbReference type="EC" id="2.1.3.15"/>
    </reaction>
</comment>
<comment type="cofactor">
    <cofactor evidence="1">
        <name>Zn(2+)</name>
        <dbReference type="ChEBI" id="CHEBI:29105"/>
    </cofactor>
    <text evidence="1">Binds 1 zinc ion per subunit.</text>
</comment>
<comment type="pathway">
    <text evidence="1">Lipid metabolism; malonyl-CoA biosynthesis; malonyl-CoA from acetyl-CoA: step 1/1.</text>
</comment>
<comment type="subunit">
    <text evidence="1">Acetyl-CoA carboxylase is a heterohexamer composed of biotin carboxyl carrier protein (AccB), biotin carboxylase (AccC) and two subunits each of ACCase subunit alpha (AccA) and ACCase subunit beta (AccD).</text>
</comment>
<comment type="subcellular location">
    <subcellularLocation>
        <location evidence="1">Cytoplasm</location>
    </subcellularLocation>
</comment>
<comment type="similarity">
    <text evidence="1">Belongs to the AccD/PCCB family.</text>
</comment>
<feature type="chain" id="PRO_0000358995" description="Acetyl-coenzyme A carboxylase carboxyl transferase subunit beta">
    <location>
        <begin position="1"/>
        <end position="304"/>
    </location>
</feature>
<feature type="domain" description="CoA carboxyltransferase N-terminal" evidence="2">
    <location>
        <begin position="29"/>
        <end position="298"/>
    </location>
</feature>
<feature type="zinc finger region" description="C4-type" evidence="1">
    <location>
        <begin position="33"/>
        <end position="55"/>
    </location>
</feature>
<feature type="binding site" evidence="1">
    <location>
        <position position="33"/>
    </location>
    <ligand>
        <name>Zn(2+)</name>
        <dbReference type="ChEBI" id="CHEBI:29105"/>
    </ligand>
</feature>
<feature type="binding site" evidence="1">
    <location>
        <position position="36"/>
    </location>
    <ligand>
        <name>Zn(2+)</name>
        <dbReference type="ChEBI" id="CHEBI:29105"/>
    </ligand>
</feature>
<feature type="binding site" evidence="1">
    <location>
        <position position="52"/>
    </location>
    <ligand>
        <name>Zn(2+)</name>
        <dbReference type="ChEBI" id="CHEBI:29105"/>
    </ligand>
</feature>
<feature type="binding site" evidence="1">
    <location>
        <position position="55"/>
    </location>
    <ligand>
        <name>Zn(2+)</name>
        <dbReference type="ChEBI" id="CHEBI:29105"/>
    </ligand>
</feature>
<dbReference type="EC" id="2.1.3.15" evidence="1"/>
<dbReference type="EMBL" id="BA000045">
    <property type="protein sequence ID" value="BAC89546.1"/>
    <property type="molecule type" value="Genomic_DNA"/>
</dbReference>
<dbReference type="RefSeq" id="NP_924551.1">
    <property type="nucleotide sequence ID" value="NC_005125.1"/>
</dbReference>
<dbReference type="RefSeq" id="WP_011141604.1">
    <property type="nucleotide sequence ID" value="NC_005125.1"/>
</dbReference>
<dbReference type="SMR" id="Q7NK73"/>
<dbReference type="STRING" id="251221.gene:10759095"/>
<dbReference type="EnsemblBacteria" id="BAC89546">
    <property type="protein sequence ID" value="BAC89546"/>
    <property type="gene ID" value="BAC89546"/>
</dbReference>
<dbReference type="KEGG" id="gvi:glr1605"/>
<dbReference type="PATRIC" id="fig|251221.4.peg.1643"/>
<dbReference type="eggNOG" id="COG0777">
    <property type="taxonomic scope" value="Bacteria"/>
</dbReference>
<dbReference type="HOGENOM" id="CLU_015486_1_1_3"/>
<dbReference type="InParanoid" id="Q7NK73"/>
<dbReference type="OrthoDB" id="9772975at2"/>
<dbReference type="PhylomeDB" id="Q7NK73"/>
<dbReference type="UniPathway" id="UPA00655">
    <property type="reaction ID" value="UER00711"/>
</dbReference>
<dbReference type="Proteomes" id="UP000000557">
    <property type="component" value="Chromosome"/>
</dbReference>
<dbReference type="GO" id="GO:0009317">
    <property type="term" value="C:acetyl-CoA carboxylase complex"/>
    <property type="evidence" value="ECO:0007669"/>
    <property type="project" value="InterPro"/>
</dbReference>
<dbReference type="GO" id="GO:0003989">
    <property type="term" value="F:acetyl-CoA carboxylase activity"/>
    <property type="evidence" value="ECO:0007669"/>
    <property type="project" value="InterPro"/>
</dbReference>
<dbReference type="GO" id="GO:0005524">
    <property type="term" value="F:ATP binding"/>
    <property type="evidence" value="ECO:0007669"/>
    <property type="project" value="UniProtKB-KW"/>
</dbReference>
<dbReference type="GO" id="GO:0016743">
    <property type="term" value="F:carboxyl- or carbamoyltransferase activity"/>
    <property type="evidence" value="ECO:0007669"/>
    <property type="project" value="UniProtKB-UniRule"/>
</dbReference>
<dbReference type="GO" id="GO:0008270">
    <property type="term" value="F:zinc ion binding"/>
    <property type="evidence" value="ECO:0007669"/>
    <property type="project" value="UniProtKB-UniRule"/>
</dbReference>
<dbReference type="GO" id="GO:0006633">
    <property type="term" value="P:fatty acid biosynthetic process"/>
    <property type="evidence" value="ECO:0000318"/>
    <property type="project" value="GO_Central"/>
</dbReference>
<dbReference type="GO" id="GO:2001295">
    <property type="term" value="P:malonyl-CoA biosynthetic process"/>
    <property type="evidence" value="ECO:0007669"/>
    <property type="project" value="UniProtKB-UniRule"/>
</dbReference>
<dbReference type="Gene3D" id="3.90.226.10">
    <property type="entry name" value="2-enoyl-CoA Hydratase, Chain A, domain 1"/>
    <property type="match status" value="1"/>
</dbReference>
<dbReference type="HAMAP" id="MF_01395">
    <property type="entry name" value="AcetylCoA_CT_beta"/>
    <property type="match status" value="1"/>
</dbReference>
<dbReference type="InterPro" id="IPR034733">
    <property type="entry name" value="AcCoA_carboxyl_beta"/>
</dbReference>
<dbReference type="InterPro" id="IPR000438">
    <property type="entry name" value="Acetyl_CoA_COase_Trfase_b_su"/>
</dbReference>
<dbReference type="InterPro" id="IPR029045">
    <property type="entry name" value="ClpP/crotonase-like_dom_sf"/>
</dbReference>
<dbReference type="InterPro" id="IPR011762">
    <property type="entry name" value="COA_CT_N"/>
</dbReference>
<dbReference type="NCBIfam" id="TIGR00515">
    <property type="entry name" value="accD"/>
    <property type="match status" value="1"/>
</dbReference>
<dbReference type="PANTHER" id="PTHR42995">
    <property type="entry name" value="ACETYL-COENZYME A CARBOXYLASE CARBOXYL TRANSFERASE SUBUNIT BETA, CHLOROPLASTIC"/>
    <property type="match status" value="1"/>
</dbReference>
<dbReference type="PANTHER" id="PTHR42995:SF5">
    <property type="entry name" value="ACETYL-COENZYME A CARBOXYLASE CARBOXYL TRANSFERASE SUBUNIT BETA, CHLOROPLASTIC"/>
    <property type="match status" value="1"/>
</dbReference>
<dbReference type="Pfam" id="PF01039">
    <property type="entry name" value="Carboxyl_trans"/>
    <property type="match status" value="1"/>
</dbReference>
<dbReference type="PRINTS" id="PR01070">
    <property type="entry name" value="ACCCTRFRASEB"/>
</dbReference>
<dbReference type="SUPFAM" id="SSF52096">
    <property type="entry name" value="ClpP/crotonase"/>
    <property type="match status" value="1"/>
</dbReference>
<dbReference type="PROSITE" id="PS50980">
    <property type="entry name" value="COA_CT_NTER"/>
    <property type="match status" value="1"/>
</dbReference>
<keyword id="KW-0067">ATP-binding</keyword>
<keyword id="KW-0963">Cytoplasm</keyword>
<keyword id="KW-0275">Fatty acid biosynthesis</keyword>
<keyword id="KW-0276">Fatty acid metabolism</keyword>
<keyword id="KW-0444">Lipid biosynthesis</keyword>
<keyword id="KW-0443">Lipid metabolism</keyword>
<keyword id="KW-0479">Metal-binding</keyword>
<keyword id="KW-0547">Nucleotide-binding</keyword>
<keyword id="KW-1185">Reference proteome</keyword>
<keyword id="KW-0808">Transferase</keyword>
<keyword id="KW-0862">Zinc</keyword>
<keyword id="KW-0863">Zinc-finger</keyword>
<gene>
    <name evidence="1" type="primary">accD</name>
    <name type="ordered locus">glr1605</name>
</gene>